<dbReference type="GO" id="GO:0005576">
    <property type="term" value="C:extracellular region"/>
    <property type="evidence" value="ECO:0000314"/>
    <property type="project" value="UniProtKB"/>
</dbReference>
<feature type="peptide" id="PRO_0000402815" description="Tachykinin-like peptide-V" evidence="2">
    <location>
        <begin position="1"/>
        <end position="9"/>
    </location>
</feature>
<feature type="modified residue" description="Pyrrolidone carboxylic acid" evidence="2">
    <location>
        <position position="1"/>
    </location>
</feature>
<keyword id="KW-0903">Direct protein sequencing</keyword>
<keyword id="KW-0873">Pyrrolidone carboxylic acid</keyword>
<keyword id="KW-0964">Secreted</keyword>
<reference evidence="4" key="1">
    <citation type="journal article" date="2005" name="Rapid Commun. Mass Spectrom.">
        <title>Electrospray ionization quadrupole time-of-flight and matrix-assisted laser desorption/ionization tandem time-of-flight mass spectrometric analyses to solve micro-heterogeneity in post-translationally modified peptides from Phoneutria nigriventer (Aranea, Ctenidae) venom.</title>
        <authorList>
            <person name="Pimenta A.M.C."/>
            <person name="Rates B."/>
            <person name="Bloch C. Jr."/>
            <person name="Gomes P.C."/>
            <person name="Santoro M.M."/>
            <person name="de Lima M.E."/>
            <person name="Richardson M."/>
            <person name="Cordeiro M.N."/>
        </authorList>
    </citation>
    <scope>PROTEIN SEQUENCE</scope>
    <scope>SUBCELLULAR LOCATION</scope>
    <scope>TISSUE SPECIFICITY</scope>
    <scope>MASS SPECTROMETRY</scope>
    <scope>PYROGLUTAMATE FORMATION AT GLN-1</scope>
    <source>
        <tissue evidence="2">Venom</tissue>
    </source>
</reference>
<sequence>QKKDKKDRF</sequence>
<accession>P86302</accession>
<comment type="subcellular location">
    <subcellularLocation>
        <location evidence="2">Secreted</location>
    </subcellularLocation>
</comment>
<comment type="tissue specificity">
    <text evidence="2">Expressed by the venom gland.</text>
</comment>
<comment type="mass spectrometry"/>
<comment type="similarity">
    <text evidence="1">Belongs to the tachykinin family.</text>
</comment>
<name>TLP5_PHONI</name>
<organism>
    <name type="scientific">Phoneutria nigriventer</name>
    <name type="common">Brazilian armed spider</name>
    <name type="synonym">Ctenus nigriventer</name>
    <dbReference type="NCBI Taxonomy" id="6918"/>
    <lineage>
        <taxon>Eukaryota</taxon>
        <taxon>Metazoa</taxon>
        <taxon>Ecdysozoa</taxon>
        <taxon>Arthropoda</taxon>
        <taxon>Chelicerata</taxon>
        <taxon>Arachnida</taxon>
        <taxon>Araneae</taxon>
        <taxon>Araneomorphae</taxon>
        <taxon>Entelegynae</taxon>
        <taxon>Lycosoidea</taxon>
        <taxon>Ctenidae</taxon>
        <taxon>Phoneutria</taxon>
    </lineage>
</organism>
<evidence type="ECO:0000255" key="1"/>
<evidence type="ECO:0000269" key="2">
    <source>
    </source>
</evidence>
<evidence type="ECO:0000303" key="3">
    <source>
    </source>
</evidence>
<evidence type="ECO:0000305" key="4"/>
<evidence type="ECO:0000305" key="5">
    <source>
    </source>
</evidence>
<protein>
    <recommendedName>
        <fullName evidence="5">Tachykinin-like peptide-V</fullName>
    </recommendedName>
    <alternativeName>
        <fullName evidence="3">P.nigriventer tachykinin peptides V</fullName>
        <shortName evidence="3">PnTkP-V</shortName>
    </alternativeName>
    <alternativeName>
        <fullName evidence="4">U29-ctenitoxin-Pn1e</fullName>
        <shortName evidence="4">U29-CNTX-Pn1e</shortName>
    </alternativeName>
</protein>
<proteinExistence type="evidence at protein level"/>